<protein>
    <recommendedName>
        <fullName>Glycosyl hydrolase family 109 protein</fullName>
        <ecNumber>3.2.1.-</ecNumber>
    </recommendedName>
</protein>
<keyword id="KW-0326">Glycosidase</keyword>
<keyword id="KW-0378">Hydrolase</keyword>
<keyword id="KW-0520">NAD</keyword>
<keyword id="KW-0732">Signal</keyword>
<reference key="1">
    <citation type="submission" date="2006-12" db="EMBL/GenBank/DDBJ databases">
        <title>Complete sequence of Shewanella sp. W3-18-1.</title>
        <authorList>
            <consortium name="US DOE Joint Genome Institute"/>
            <person name="Copeland A."/>
            <person name="Lucas S."/>
            <person name="Lapidus A."/>
            <person name="Barry K."/>
            <person name="Detter J.C."/>
            <person name="Glavina del Rio T."/>
            <person name="Hammon N."/>
            <person name="Israni S."/>
            <person name="Dalin E."/>
            <person name="Tice H."/>
            <person name="Pitluck S."/>
            <person name="Chain P."/>
            <person name="Malfatti S."/>
            <person name="Shin M."/>
            <person name="Vergez L."/>
            <person name="Schmutz J."/>
            <person name="Larimer F."/>
            <person name="Land M."/>
            <person name="Hauser L."/>
            <person name="Kyrpides N."/>
            <person name="Lykidis A."/>
            <person name="Tiedje J."/>
            <person name="Richardson P."/>
        </authorList>
    </citation>
    <scope>NUCLEOTIDE SEQUENCE [LARGE SCALE GENOMIC DNA]</scope>
    <source>
        <strain>W3-18-1</strain>
    </source>
</reference>
<proteinExistence type="inferred from homology"/>
<evidence type="ECO:0000250" key="1"/>
<evidence type="ECO:0000255" key="2">
    <source>
        <dbReference type="PROSITE-ProRule" id="PRU00648"/>
    </source>
</evidence>
<evidence type="ECO:0000305" key="3"/>
<organism>
    <name type="scientific">Shewanella sp. (strain W3-18-1)</name>
    <dbReference type="NCBI Taxonomy" id="351745"/>
    <lineage>
        <taxon>Bacteria</taxon>
        <taxon>Pseudomonadati</taxon>
        <taxon>Pseudomonadota</taxon>
        <taxon>Gammaproteobacteria</taxon>
        <taxon>Alteromonadales</taxon>
        <taxon>Shewanellaceae</taxon>
        <taxon>Shewanella</taxon>
    </lineage>
</organism>
<accession>A1RI61</accession>
<name>GH109_SHESW</name>
<feature type="signal peptide" description="Tat-type signal" evidence="2">
    <location>
        <begin position="1"/>
        <end position="31"/>
    </location>
</feature>
<feature type="chain" id="PRO_5000203918" description="Glycosyl hydrolase family 109 protein">
    <location>
        <begin position="32"/>
        <end position="459"/>
    </location>
</feature>
<feature type="binding site" evidence="1">
    <location>
        <begin position="64"/>
        <end position="65"/>
    </location>
    <ligand>
        <name>NAD(+)</name>
        <dbReference type="ChEBI" id="CHEBI:57540"/>
    </ligand>
</feature>
<feature type="binding site" evidence="1">
    <location>
        <position position="86"/>
    </location>
    <ligand>
        <name>NAD(+)</name>
        <dbReference type="ChEBI" id="CHEBI:57540"/>
    </ligand>
</feature>
<feature type="binding site" evidence="1">
    <location>
        <begin position="135"/>
        <end position="138"/>
    </location>
    <ligand>
        <name>NAD(+)</name>
        <dbReference type="ChEBI" id="CHEBI:57540"/>
    </ligand>
</feature>
<feature type="binding site" evidence="1">
    <location>
        <begin position="155"/>
        <end position="156"/>
    </location>
    <ligand>
        <name>NAD(+)</name>
        <dbReference type="ChEBI" id="CHEBI:57540"/>
    </ligand>
</feature>
<feature type="binding site" evidence="1">
    <location>
        <position position="184"/>
    </location>
    <ligand>
        <name>NAD(+)</name>
        <dbReference type="ChEBI" id="CHEBI:57540"/>
    </ligand>
</feature>
<feature type="binding site" evidence="1">
    <location>
        <position position="213"/>
    </location>
    <ligand>
        <name>substrate</name>
    </ligand>
</feature>
<feature type="binding site" evidence="1">
    <location>
        <position position="232"/>
    </location>
    <ligand>
        <name>substrate</name>
    </ligand>
</feature>
<feature type="binding site" evidence="1">
    <location>
        <begin position="244"/>
        <end position="247"/>
    </location>
    <ligand>
        <name>substrate</name>
    </ligand>
</feature>
<feature type="binding site" evidence="1">
    <location>
        <position position="244"/>
    </location>
    <ligand>
        <name>NAD(+)</name>
        <dbReference type="ChEBI" id="CHEBI:57540"/>
    </ligand>
</feature>
<feature type="binding site" evidence="1">
    <location>
        <position position="326"/>
    </location>
    <ligand>
        <name>substrate</name>
    </ligand>
</feature>
<dbReference type="EC" id="3.2.1.-"/>
<dbReference type="EMBL" id="CP000503">
    <property type="protein sequence ID" value="ABM24356.1"/>
    <property type="molecule type" value="Genomic_DNA"/>
</dbReference>
<dbReference type="RefSeq" id="WP_011788857.1">
    <property type="nucleotide sequence ID" value="NC_008750.1"/>
</dbReference>
<dbReference type="SMR" id="A1RI61"/>
<dbReference type="CAZy" id="GH109">
    <property type="family name" value="Glycoside Hydrolase Family 109"/>
</dbReference>
<dbReference type="KEGG" id="shw:Sputw3181_1518"/>
<dbReference type="HOGENOM" id="CLU_046965_0_0_6"/>
<dbReference type="Proteomes" id="UP000002597">
    <property type="component" value="Chromosome"/>
</dbReference>
<dbReference type="GO" id="GO:0016798">
    <property type="term" value="F:hydrolase activity, acting on glycosyl bonds"/>
    <property type="evidence" value="ECO:0007669"/>
    <property type="project" value="UniProtKB-KW"/>
</dbReference>
<dbReference type="GO" id="GO:0000166">
    <property type="term" value="F:nucleotide binding"/>
    <property type="evidence" value="ECO:0007669"/>
    <property type="project" value="InterPro"/>
</dbReference>
<dbReference type="Gene3D" id="3.30.360.10">
    <property type="entry name" value="Dihydrodipicolinate Reductase, domain 2"/>
    <property type="match status" value="1"/>
</dbReference>
<dbReference type="Gene3D" id="3.40.50.720">
    <property type="entry name" value="NAD(P)-binding Rossmann-like Domain"/>
    <property type="match status" value="1"/>
</dbReference>
<dbReference type="InterPro" id="IPR000683">
    <property type="entry name" value="Gfo/Idh/MocA-like_OxRdtase_N"/>
</dbReference>
<dbReference type="InterPro" id="IPR050463">
    <property type="entry name" value="Gfo/Idh/MocA_oxidrdct_glycsds"/>
</dbReference>
<dbReference type="InterPro" id="IPR049303">
    <property type="entry name" value="Glyco_hydro_109_C"/>
</dbReference>
<dbReference type="InterPro" id="IPR036291">
    <property type="entry name" value="NAD(P)-bd_dom_sf"/>
</dbReference>
<dbReference type="InterPro" id="IPR006311">
    <property type="entry name" value="TAT_signal"/>
</dbReference>
<dbReference type="InterPro" id="IPR019546">
    <property type="entry name" value="TAT_signal_bac_arc"/>
</dbReference>
<dbReference type="PANTHER" id="PTHR43818">
    <property type="entry name" value="BCDNA.GH03377"/>
    <property type="match status" value="1"/>
</dbReference>
<dbReference type="PANTHER" id="PTHR43818:SF1">
    <property type="entry name" value="GLYCOSYL HYDROLASE FAMILY 109 PROTEIN"/>
    <property type="match status" value="1"/>
</dbReference>
<dbReference type="Pfam" id="PF01408">
    <property type="entry name" value="GFO_IDH_MocA"/>
    <property type="match status" value="1"/>
</dbReference>
<dbReference type="Pfam" id="PF21252">
    <property type="entry name" value="Glyco_hydro_109_C"/>
    <property type="match status" value="1"/>
</dbReference>
<dbReference type="Pfam" id="PF10518">
    <property type="entry name" value="TAT_signal"/>
    <property type="match status" value="1"/>
</dbReference>
<dbReference type="SUPFAM" id="SSF51735">
    <property type="entry name" value="NAD(P)-binding Rossmann-fold domains"/>
    <property type="match status" value="1"/>
</dbReference>
<dbReference type="PROSITE" id="PS51318">
    <property type="entry name" value="TAT"/>
    <property type="match status" value="1"/>
</dbReference>
<gene>
    <name type="ordered locus">Sputw3181_1518</name>
</gene>
<sequence>MHNIHRRHFLKAAGAVTAGLITANITASTHANSVAPKPQTGKSVIGLIAPKMDVVRVGFIGVGERGFSHVEQFCHLEGVELKAICDTHQAVIDRAVAHIAKQNRPQPTVYTGDDLSYRDLLSRDDIDIVIISTPWEWHAPMAIETMESGKHAFVEVPLALTVEECWQIVDTAERTQKNCMMMENVNYGREELMVLNMVRQGVFGELLHGEAAYIHELRWQMKEIDHKTGSWRTYWHTKRNGNLYPTHGLGPVSQYMNINRGDRFDYLTSMSSPALGRALYAKREFPADHERNQLKYINGDINTSLIKTVKGRTIMVQHDTTTPRPYSRHNLIQGTNGVFAGFPNRIAVEHGGFGKSYHEWDMDMQKWYDKYDHPLWQRIGKEAEINGGHGGMDFVMLWRMIYCLRNGEALDQDVYDAASWSVVNILSEQSVNNRSNSVTFPDFTRGAWEHAKPLGIVGA</sequence>
<comment type="function">
    <text evidence="1">Glycosidase.</text>
</comment>
<comment type="cofactor">
    <cofactor evidence="1">
        <name>NAD(+)</name>
        <dbReference type="ChEBI" id="CHEBI:57540"/>
    </cofactor>
    <text evidence="1">Binds 1 NAD(+) per subunit. The NAD(+) cannot dissociate.</text>
</comment>
<comment type="PTM">
    <text>Predicted to be exported by the Tat system. The position of the signal peptide cleavage has not been experimentally proven.</text>
</comment>
<comment type="similarity">
    <text evidence="3">Belongs to the Gfo/Idh/MocA family. Glycosyl hydrolase 109 subfamily.</text>
</comment>